<keyword id="KW-0119">Carbohydrate metabolism</keyword>
<keyword id="KW-0325">Glycoprotein</keyword>
<keyword id="KW-0326">Glycosidase</keyword>
<keyword id="KW-0378">Hydrolase</keyword>
<keyword id="KW-0624">Polysaccharide degradation</keyword>
<keyword id="KW-0964">Secreted</keyword>
<keyword id="KW-0732">Signal</keyword>
<keyword id="KW-0858">Xylan degradation</keyword>
<gene>
    <name type="primary">xlnD</name>
    <name type="synonym">xylA</name>
    <name type="ORF">AFUB_016310</name>
</gene>
<dbReference type="EC" id="3.2.1.37"/>
<dbReference type="EMBL" id="DS499594">
    <property type="protein sequence ID" value="EDP56909.1"/>
    <property type="molecule type" value="Genomic_DNA"/>
</dbReference>
<dbReference type="SMR" id="B0XP71"/>
<dbReference type="GlyCosmos" id="B0XP71">
    <property type="glycosylation" value="13 sites, No reported glycans"/>
</dbReference>
<dbReference type="EnsemblFungi" id="EDP56909">
    <property type="protein sequence ID" value="EDP56909"/>
    <property type="gene ID" value="AFUB_016310"/>
</dbReference>
<dbReference type="VEuPathDB" id="FungiDB:AFUB_016310"/>
<dbReference type="HOGENOM" id="CLU_004542_5_3_1"/>
<dbReference type="OrthoDB" id="73603at5052"/>
<dbReference type="PhylomeDB" id="B0XP71"/>
<dbReference type="UniPathway" id="UPA00114"/>
<dbReference type="Proteomes" id="UP000001699">
    <property type="component" value="Unassembled WGS sequence"/>
</dbReference>
<dbReference type="GO" id="GO:0005576">
    <property type="term" value="C:extracellular region"/>
    <property type="evidence" value="ECO:0007669"/>
    <property type="project" value="UniProtKB-SubCell"/>
</dbReference>
<dbReference type="GO" id="GO:0046556">
    <property type="term" value="F:alpha-L-arabinofuranosidase activity"/>
    <property type="evidence" value="ECO:0007669"/>
    <property type="project" value="TreeGrafter"/>
</dbReference>
<dbReference type="GO" id="GO:0009044">
    <property type="term" value="F:xylan 1,4-beta-xylosidase activity"/>
    <property type="evidence" value="ECO:0007669"/>
    <property type="project" value="UniProtKB-EC"/>
</dbReference>
<dbReference type="GO" id="GO:0031222">
    <property type="term" value="P:arabinan catabolic process"/>
    <property type="evidence" value="ECO:0007669"/>
    <property type="project" value="TreeGrafter"/>
</dbReference>
<dbReference type="GO" id="GO:0045493">
    <property type="term" value="P:xylan catabolic process"/>
    <property type="evidence" value="ECO:0007669"/>
    <property type="project" value="UniProtKB-UniPathway"/>
</dbReference>
<dbReference type="FunFam" id="2.60.40.10:FF:001420">
    <property type="entry name" value="Exo-1,4-beta-xylosidase xlnD"/>
    <property type="match status" value="1"/>
</dbReference>
<dbReference type="FunFam" id="3.20.20.300:FF:000009">
    <property type="entry name" value="Exo-1,4-beta-xylosidase xlnD"/>
    <property type="match status" value="1"/>
</dbReference>
<dbReference type="FunFam" id="3.40.50.1700:FF:000007">
    <property type="entry name" value="Exo-1,4-beta-xylosidase xlnD"/>
    <property type="match status" value="1"/>
</dbReference>
<dbReference type="Gene3D" id="3.40.50.1700">
    <property type="entry name" value="Glycoside hydrolase family 3 C-terminal domain"/>
    <property type="match status" value="1"/>
</dbReference>
<dbReference type="Gene3D" id="3.20.20.300">
    <property type="entry name" value="Glycoside hydrolase, family 3, N-terminal domain"/>
    <property type="match status" value="1"/>
</dbReference>
<dbReference type="Gene3D" id="2.60.40.10">
    <property type="entry name" value="Immunoglobulins"/>
    <property type="match status" value="1"/>
</dbReference>
<dbReference type="InterPro" id="IPR044993">
    <property type="entry name" value="BXL"/>
</dbReference>
<dbReference type="InterPro" id="IPR026891">
    <property type="entry name" value="Fn3-like"/>
</dbReference>
<dbReference type="InterPro" id="IPR002772">
    <property type="entry name" value="Glyco_hydro_3_C"/>
</dbReference>
<dbReference type="InterPro" id="IPR036881">
    <property type="entry name" value="Glyco_hydro_3_C_sf"/>
</dbReference>
<dbReference type="InterPro" id="IPR001764">
    <property type="entry name" value="Glyco_hydro_3_N"/>
</dbReference>
<dbReference type="InterPro" id="IPR036962">
    <property type="entry name" value="Glyco_hydro_3_N_sf"/>
</dbReference>
<dbReference type="InterPro" id="IPR017853">
    <property type="entry name" value="Glycoside_hydrolase_SF"/>
</dbReference>
<dbReference type="InterPro" id="IPR013783">
    <property type="entry name" value="Ig-like_fold"/>
</dbReference>
<dbReference type="PANTHER" id="PTHR42721:SF13">
    <property type="entry name" value="EXO-1,4-BETA-XYLOSIDASE XLND"/>
    <property type="match status" value="1"/>
</dbReference>
<dbReference type="PANTHER" id="PTHR42721">
    <property type="entry name" value="SUGAR HYDROLASE-RELATED"/>
    <property type="match status" value="1"/>
</dbReference>
<dbReference type="Pfam" id="PF14310">
    <property type="entry name" value="Fn3-like"/>
    <property type="match status" value="1"/>
</dbReference>
<dbReference type="Pfam" id="PF00933">
    <property type="entry name" value="Glyco_hydro_3"/>
    <property type="match status" value="1"/>
</dbReference>
<dbReference type="Pfam" id="PF01915">
    <property type="entry name" value="Glyco_hydro_3_C"/>
    <property type="match status" value="1"/>
</dbReference>
<dbReference type="SMART" id="SM01217">
    <property type="entry name" value="Fn3_like"/>
    <property type="match status" value="1"/>
</dbReference>
<dbReference type="SUPFAM" id="SSF51445">
    <property type="entry name" value="(Trans)glycosidases"/>
    <property type="match status" value="1"/>
</dbReference>
<dbReference type="SUPFAM" id="SSF52279">
    <property type="entry name" value="Beta-D-glucan exohydrolase, C-terminal domain"/>
    <property type="match status" value="1"/>
</dbReference>
<feature type="signal peptide" evidence="2">
    <location>
        <begin position="1"/>
        <end position="20"/>
    </location>
</feature>
<feature type="chain" id="PRO_0000393286" description="Probable exo-1,4-beta-xylosidase xlnD">
    <location>
        <begin position="21"/>
        <end position="792"/>
    </location>
</feature>
<feature type="active site" evidence="1">
    <location>
        <position position="310"/>
    </location>
</feature>
<feature type="glycosylation site" description="N-linked (GlcNAc...) asparagine" evidence="2">
    <location>
        <position position="23"/>
    </location>
</feature>
<feature type="glycosylation site" description="N-linked (GlcNAc...) asparagine" evidence="2">
    <location>
        <position position="87"/>
    </location>
</feature>
<feature type="glycosylation site" description="N-linked (GlcNAc...) asparagine" evidence="2">
    <location>
        <position position="118"/>
    </location>
</feature>
<feature type="glycosylation site" description="N-linked (GlcNAc...) asparagine" evidence="2">
    <location>
        <position position="142"/>
    </location>
</feature>
<feature type="glycosylation site" description="N-linked (GlcNAc...) asparagine" evidence="2">
    <location>
        <position position="246"/>
    </location>
</feature>
<feature type="glycosylation site" description="N-linked (GlcNAc...) asparagine" evidence="2">
    <location>
        <position position="326"/>
    </location>
</feature>
<feature type="glycosylation site" description="N-linked (GlcNAc...) asparagine" evidence="2">
    <location>
        <position position="385"/>
    </location>
</feature>
<feature type="glycosylation site" description="N-linked (GlcNAc...) asparagine" evidence="2">
    <location>
        <position position="404"/>
    </location>
</feature>
<feature type="glycosylation site" description="N-linked (GlcNAc...) asparagine" evidence="2">
    <location>
        <position position="440"/>
    </location>
</feature>
<feature type="glycosylation site" description="N-linked (GlcNAc...) asparagine" evidence="2">
    <location>
        <position position="477"/>
    </location>
</feature>
<feature type="glycosylation site" description="N-linked (GlcNAc...) asparagine" evidence="2">
    <location>
        <position position="518"/>
    </location>
</feature>
<feature type="glycosylation site" description="N-linked (GlcNAc...) asparagine" evidence="2">
    <location>
        <position position="679"/>
    </location>
</feature>
<feature type="glycosylation site" description="N-linked (GlcNAc...) asparagine" evidence="2">
    <location>
        <position position="701"/>
    </location>
</feature>
<organism>
    <name type="scientific">Aspergillus fumigatus (strain CBS 144.89 / FGSC A1163 / CEA10)</name>
    <name type="common">Neosartorya fumigata</name>
    <dbReference type="NCBI Taxonomy" id="451804"/>
    <lineage>
        <taxon>Eukaryota</taxon>
        <taxon>Fungi</taxon>
        <taxon>Dikarya</taxon>
        <taxon>Ascomycota</taxon>
        <taxon>Pezizomycotina</taxon>
        <taxon>Eurotiomycetes</taxon>
        <taxon>Eurotiomycetidae</taxon>
        <taxon>Eurotiales</taxon>
        <taxon>Aspergillaceae</taxon>
        <taxon>Aspergillus</taxon>
        <taxon>Aspergillus subgen. Fumigati</taxon>
    </lineage>
</organism>
<reference key="1">
    <citation type="journal article" date="2008" name="PLoS Genet.">
        <title>Genomic islands in the pathogenic filamentous fungus Aspergillus fumigatus.</title>
        <authorList>
            <person name="Fedorova N.D."/>
            <person name="Khaldi N."/>
            <person name="Joardar V.S."/>
            <person name="Maiti R."/>
            <person name="Amedeo P."/>
            <person name="Anderson M.J."/>
            <person name="Crabtree J."/>
            <person name="Silva J.C."/>
            <person name="Badger J.H."/>
            <person name="Albarraq A."/>
            <person name="Angiuoli S."/>
            <person name="Bussey H."/>
            <person name="Bowyer P."/>
            <person name="Cotty P.J."/>
            <person name="Dyer P.S."/>
            <person name="Egan A."/>
            <person name="Galens K."/>
            <person name="Fraser-Liggett C.M."/>
            <person name="Haas B.J."/>
            <person name="Inman J.M."/>
            <person name="Kent R."/>
            <person name="Lemieux S."/>
            <person name="Malavazi I."/>
            <person name="Orvis J."/>
            <person name="Roemer T."/>
            <person name="Ronning C.M."/>
            <person name="Sundaram J.P."/>
            <person name="Sutton G."/>
            <person name="Turner G."/>
            <person name="Venter J.C."/>
            <person name="White O.R."/>
            <person name="Whitty B.R."/>
            <person name="Youngman P."/>
            <person name="Wolfe K.H."/>
            <person name="Goldman G.H."/>
            <person name="Wortman J.R."/>
            <person name="Jiang B."/>
            <person name="Denning D.W."/>
            <person name="Nierman W.C."/>
        </authorList>
    </citation>
    <scope>NUCLEOTIDE SEQUENCE [LARGE SCALE GENOMIC DNA]</scope>
    <source>
        <strain>CBS 144.89 / FGSC A1163 / CEA10</strain>
    </source>
</reference>
<protein>
    <recommendedName>
        <fullName>Probable exo-1,4-beta-xylosidase xlnD</fullName>
        <ecNumber>3.2.1.37</ecNumber>
    </recommendedName>
    <alternativeName>
        <fullName>1,4-beta-D-xylan xylohydrolase xlnD</fullName>
    </alternativeName>
    <alternativeName>
        <fullName>Beta-xylosidase A</fullName>
    </alternativeName>
    <alternativeName>
        <fullName>Beta-xylosidase xlnD</fullName>
    </alternativeName>
    <alternativeName>
        <fullName>Xylobiase xlnD</fullName>
    </alternativeName>
</protein>
<proteinExistence type="inferred from homology"/>
<name>XYND_ASPFC</name>
<sequence>MSVAKSIAAVLVALLPGALAQANTSYVDYNVEANPNLTPQSVATIDLSFPDCENGPLSKTLVCDTSARPHDRAAALVSMFTFEELVNNTGNTSPGVPRLGLPPYQVWSEALHGLDRANFTDEGEYSWATSFPMPILTMSALNRTLINQIATIIATQGRAFNNVGRYGLDVYAPNINAFRSAMWGRGQETPGEDAYCLASAYAYEYITGIQGGVDPEHLKLVATAKHYAGYDLENWDGHSRLGNDMNITQQELSEYYTPQFLVAARDAKVHSVMCSYNAVNGVPSCANSFFLQTLLRDTFGFVEDGYVSSDCDSAYNVWNPHEFAANITGAAADSIRAGTDIDCGTTYQYYFGEAFDEQEVTRAEIERGVIRLYSNLVRLGYFDGNGSVYRDLTWNDVVTTDAWNISYEAAVEGIVLLKNDGTLPLAKSVRSVALIGPWMNVTTQLQGNYFGPAPYLISPLNAFQNSDFDVNYAFGTNISSHSTDGFSEALSAAKKSDVIIFAGGIDNTLEAEAMDRMNITWPGNQLQLIDQLSQLGKPLIVLQMGGGQVDSSSLKSNKNVNSLIWGGYPGQSGGQALLDIITGKRAPAGRLVVTQYPAEYATQFPATDMSLRPHGNNPGQTYMWYTGTPVYEFGHGLFYTTFHASLPGTGKDKTSFNIQDLLTQPHPGFANVEQMPLLNFTVTITNTGKVASDYTAMLFANTTAGPAPYPNKWLVGFDRLASLEPHRSQTMTIPVTIDSVARTDEAGNRVLYPGKYELALNNERSVVLQFVLTGREAVIFKWPVEQQQISSA</sequence>
<comment type="function">
    <text evidence="1">Xylan 1,4-beta-xylosidase involved in the hydrolysis of xylan, a major structural heterogeneous polysaccharide found in plant biomass representing the second most abundant polysaccharide in the biosphere, after cellulose.</text>
</comment>
<comment type="catalytic activity">
    <reaction>
        <text>Hydrolysis of (1-&gt;4)-beta-D-xylans, to remove successive D-xylose residues from the non-reducing termini.</text>
        <dbReference type="EC" id="3.2.1.37"/>
    </reaction>
</comment>
<comment type="pathway">
    <text>Glycan degradation; xylan degradation.</text>
</comment>
<comment type="subcellular location">
    <subcellularLocation>
        <location evidence="1">Secreted</location>
    </subcellularLocation>
</comment>
<comment type="similarity">
    <text evidence="3">Belongs to the glycosyl hydrolase 3 family.</text>
</comment>
<accession>B0XP71</accession>
<evidence type="ECO:0000250" key="1"/>
<evidence type="ECO:0000255" key="2"/>
<evidence type="ECO:0000305" key="3"/>